<accession>P61240</accession>
<comment type="cofactor">
    <cofactor evidence="1">
        <name>Zn(2+)</name>
        <dbReference type="ChEBI" id="CHEBI:29105"/>
    </cofactor>
    <text evidence="1">Binds 1 zinc ion per subunit.</text>
</comment>
<comment type="subunit">
    <text evidence="1">Part of the 30S ribosomal subunit.</text>
</comment>
<comment type="similarity">
    <text evidence="1">Belongs to the eukaryotic ribosomal protein eS31 family.</text>
</comment>
<feature type="chain" id="PRO_0000137699" description="Small ribosomal subunit protein eS31">
    <location>
        <begin position="1"/>
        <end position="61"/>
    </location>
</feature>
<feature type="zinc finger region" description="C4-type" evidence="1">
    <location>
        <begin position="22"/>
        <end position="41"/>
    </location>
</feature>
<feature type="binding site" evidence="1">
    <location>
        <position position="22"/>
    </location>
    <ligand>
        <name>Zn(2+)</name>
        <dbReference type="ChEBI" id="CHEBI:29105"/>
    </ligand>
</feature>
<feature type="binding site" evidence="1">
    <location>
        <position position="25"/>
    </location>
    <ligand>
        <name>Zn(2+)</name>
        <dbReference type="ChEBI" id="CHEBI:29105"/>
    </ligand>
</feature>
<feature type="binding site" evidence="1">
    <location>
        <position position="38"/>
    </location>
    <ligand>
        <name>Zn(2+)</name>
        <dbReference type="ChEBI" id="CHEBI:29105"/>
    </ligand>
</feature>
<feature type="binding site" evidence="1">
    <location>
        <position position="41"/>
    </location>
    <ligand>
        <name>Zn(2+)</name>
        <dbReference type="ChEBI" id="CHEBI:29105"/>
    </ligand>
</feature>
<protein>
    <recommendedName>
        <fullName evidence="1">Small ribosomal subunit protein eS31</fullName>
    </recommendedName>
    <alternativeName>
        <fullName evidence="2">30S ribosomal protein S27ae</fullName>
    </alternativeName>
</protein>
<evidence type="ECO:0000255" key="1">
    <source>
        <dbReference type="HAMAP-Rule" id="MF_00777"/>
    </source>
</evidence>
<evidence type="ECO:0000305" key="2"/>
<keyword id="KW-0479">Metal-binding</keyword>
<keyword id="KW-1185">Reference proteome</keyword>
<keyword id="KW-0687">Ribonucleoprotein</keyword>
<keyword id="KW-0689">Ribosomal protein</keyword>
<keyword id="KW-0862">Zinc</keyword>
<keyword id="KW-0863">Zinc-finger</keyword>
<organism>
    <name type="scientific">Nanoarchaeum equitans (strain Kin4-M)</name>
    <dbReference type="NCBI Taxonomy" id="228908"/>
    <lineage>
        <taxon>Archaea</taxon>
        <taxon>Nanobdellota</taxon>
        <taxon>Candidatus Nanoarchaeia</taxon>
        <taxon>Nanoarchaeales</taxon>
        <taxon>Nanoarchaeaceae</taxon>
        <taxon>Nanoarchaeum</taxon>
    </lineage>
</organism>
<sequence length="61" mass="7245">MAQVWKYYEIKDGKLIRKKKVCPRCGSFMAEHKDRYHCGKCGYTEWKVERPKIVIHGATIE</sequence>
<gene>
    <name evidence="1" type="primary">rps27ae</name>
    <name type="ordered locus">NEQ176</name>
</gene>
<name>RS27A_NANEQ</name>
<proteinExistence type="inferred from homology"/>
<reference key="1">
    <citation type="journal article" date="2003" name="Proc. Natl. Acad. Sci. U.S.A.">
        <title>The genome of Nanoarchaeum equitans: insights into early archaeal evolution and derived parasitism.</title>
        <authorList>
            <person name="Waters E."/>
            <person name="Hohn M.J."/>
            <person name="Ahel I."/>
            <person name="Graham D.E."/>
            <person name="Adams M.D."/>
            <person name="Barnstead M."/>
            <person name="Beeson K.Y."/>
            <person name="Bibbs L."/>
            <person name="Bolanos R."/>
            <person name="Keller M."/>
            <person name="Kretz K."/>
            <person name="Lin X."/>
            <person name="Mathur E."/>
            <person name="Ni J."/>
            <person name="Podar M."/>
            <person name="Richardson T."/>
            <person name="Sutton G.G."/>
            <person name="Simon M."/>
            <person name="Soell D."/>
            <person name="Stetter K.O."/>
            <person name="Short J.M."/>
            <person name="Noorderwier M."/>
        </authorList>
    </citation>
    <scope>NUCLEOTIDE SEQUENCE [LARGE SCALE GENOMIC DNA]</scope>
    <source>
        <strain>Kin4-M</strain>
    </source>
</reference>
<dbReference type="EMBL" id="AE017199">
    <property type="protein sequence ID" value="AAR39030.1"/>
    <property type="molecule type" value="Genomic_DNA"/>
</dbReference>
<dbReference type="STRING" id="228908.NEQ176"/>
<dbReference type="EnsemblBacteria" id="AAR39030">
    <property type="protein sequence ID" value="AAR39030"/>
    <property type="gene ID" value="NEQ176"/>
</dbReference>
<dbReference type="KEGG" id="neq:NEQ176"/>
<dbReference type="PATRIC" id="fig|228908.8.peg.180"/>
<dbReference type="HOGENOM" id="CLU_179743_1_0_2"/>
<dbReference type="Proteomes" id="UP000000578">
    <property type="component" value="Chromosome"/>
</dbReference>
<dbReference type="GO" id="GO:1990904">
    <property type="term" value="C:ribonucleoprotein complex"/>
    <property type="evidence" value="ECO:0007669"/>
    <property type="project" value="UniProtKB-KW"/>
</dbReference>
<dbReference type="GO" id="GO:0005840">
    <property type="term" value="C:ribosome"/>
    <property type="evidence" value="ECO:0007669"/>
    <property type="project" value="UniProtKB-KW"/>
</dbReference>
<dbReference type="GO" id="GO:0003735">
    <property type="term" value="F:structural constituent of ribosome"/>
    <property type="evidence" value="ECO:0007669"/>
    <property type="project" value="InterPro"/>
</dbReference>
<dbReference type="GO" id="GO:0008270">
    <property type="term" value="F:zinc ion binding"/>
    <property type="evidence" value="ECO:0007669"/>
    <property type="project" value="UniProtKB-UniRule"/>
</dbReference>
<dbReference type="GO" id="GO:0006412">
    <property type="term" value="P:translation"/>
    <property type="evidence" value="ECO:0007669"/>
    <property type="project" value="UniProtKB-UniRule"/>
</dbReference>
<dbReference type="Gene3D" id="6.20.50.180">
    <property type="match status" value="1"/>
</dbReference>
<dbReference type="HAMAP" id="MF_00777">
    <property type="entry name" value="Ribosomal_eS31"/>
    <property type="match status" value="1"/>
</dbReference>
<dbReference type="InterPro" id="IPR002906">
    <property type="entry name" value="Ribosomal_eS31"/>
</dbReference>
<dbReference type="InterPro" id="IPR022845">
    <property type="entry name" value="Ribosomal_eS31_arc"/>
</dbReference>
<dbReference type="InterPro" id="IPR011332">
    <property type="entry name" value="Ribosomal_zn-bd"/>
</dbReference>
<dbReference type="NCBIfam" id="NF001669">
    <property type="entry name" value="PRK00432.1"/>
    <property type="match status" value="1"/>
</dbReference>
<dbReference type="Pfam" id="PF01599">
    <property type="entry name" value="Ribosomal_S27"/>
    <property type="match status" value="1"/>
</dbReference>
<dbReference type="SMART" id="SM01402">
    <property type="entry name" value="Ribosomal_S27"/>
    <property type="match status" value="1"/>
</dbReference>
<dbReference type="SUPFAM" id="SSF57829">
    <property type="entry name" value="Zn-binding ribosomal proteins"/>
    <property type="match status" value="1"/>
</dbReference>